<keyword id="KW-0378">Hydrolase</keyword>
<keyword id="KW-1185">Reference proteome</keyword>
<dbReference type="EC" id="3.1.3.79"/>
<dbReference type="EMBL" id="AE007869">
    <property type="protein sequence ID" value="AAK86468.1"/>
    <property type="molecule type" value="Genomic_DNA"/>
</dbReference>
<dbReference type="EMBL" id="EF530046">
    <property type="protein sequence ID" value="ABU63293.1"/>
    <property type="molecule type" value="Genomic_DNA"/>
</dbReference>
<dbReference type="PIR" id="AF2657">
    <property type="entry name" value="AF2657"/>
</dbReference>
<dbReference type="PIR" id="C97439">
    <property type="entry name" value="C97439"/>
</dbReference>
<dbReference type="RefSeq" id="NP_353683.1">
    <property type="nucleotide sequence ID" value="NC_003062.2"/>
</dbReference>
<dbReference type="RefSeq" id="WP_010971047.1">
    <property type="nucleotide sequence ID" value="NC_003062.2"/>
</dbReference>
<dbReference type="SMR" id="A9CK30"/>
<dbReference type="STRING" id="176299.Atu0660"/>
<dbReference type="EnsemblBacteria" id="AAK86468">
    <property type="protein sequence ID" value="AAK86468"/>
    <property type="gene ID" value="Atu0660"/>
</dbReference>
<dbReference type="GeneID" id="1132698"/>
<dbReference type="KEGG" id="atu:Atu0660"/>
<dbReference type="PATRIC" id="fig|176299.10.peg.653"/>
<dbReference type="eggNOG" id="COG0561">
    <property type="taxonomic scope" value="Bacteria"/>
</dbReference>
<dbReference type="HOGENOM" id="CLU_030534_0_1_5"/>
<dbReference type="OrthoDB" id="7847955at2"/>
<dbReference type="BioCyc" id="AGRO:ATU0660-MONOMER"/>
<dbReference type="BioCyc" id="MetaCyc:MONOMER-14461"/>
<dbReference type="BRENDA" id="3.1.3.79">
    <property type="organism ID" value="200"/>
</dbReference>
<dbReference type="UniPathway" id="UPA01006">
    <property type="reaction ID" value="UER01010"/>
</dbReference>
<dbReference type="Proteomes" id="UP000000813">
    <property type="component" value="Chromosome circular"/>
</dbReference>
<dbReference type="GO" id="GO:0016791">
    <property type="term" value="F:phosphatase activity"/>
    <property type="evidence" value="ECO:0000314"/>
    <property type="project" value="UniProtKB"/>
</dbReference>
<dbReference type="GO" id="GO:0046351">
    <property type="term" value="P:disaccharide biosynthetic process"/>
    <property type="evidence" value="ECO:0000314"/>
    <property type="project" value="UniProtKB"/>
</dbReference>
<dbReference type="CDD" id="cd02605">
    <property type="entry name" value="HAD_SPP"/>
    <property type="match status" value="1"/>
</dbReference>
<dbReference type="Gene3D" id="3.90.1070.10">
    <property type="match status" value="1"/>
</dbReference>
<dbReference type="Gene3D" id="3.40.50.1000">
    <property type="entry name" value="HAD superfamily/HAD-like"/>
    <property type="match status" value="1"/>
</dbReference>
<dbReference type="InterPro" id="IPR036412">
    <property type="entry name" value="HAD-like_sf"/>
</dbReference>
<dbReference type="InterPro" id="IPR006379">
    <property type="entry name" value="HAD-SF_hydro_IIB"/>
</dbReference>
<dbReference type="InterPro" id="IPR023214">
    <property type="entry name" value="HAD_sf"/>
</dbReference>
<dbReference type="InterPro" id="IPR006380">
    <property type="entry name" value="SPP-like_dom"/>
</dbReference>
<dbReference type="InterPro" id="IPR051518">
    <property type="entry name" value="Sucrose_Phosphatase"/>
</dbReference>
<dbReference type="NCBIfam" id="TIGR01484">
    <property type="entry name" value="HAD-SF-IIB"/>
    <property type="match status" value="1"/>
</dbReference>
<dbReference type="PANTHER" id="PTHR46521">
    <property type="entry name" value="SUCROSE-PHOSPHATASE 2-RELATED"/>
    <property type="match status" value="1"/>
</dbReference>
<dbReference type="PANTHER" id="PTHR46521:SF4">
    <property type="entry name" value="SUCROSE-PHOSPHATASE 2-RELATED"/>
    <property type="match status" value="1"/>
</dbReference>
<dbReference type="Pfam" id="PF05116">
    <property type="entry name" value="S6PP"/>
    <property type="match status" value="1"/>
</dbReference>
<dbReference type="SFLD" id="SFLDG01141">
    <property type="entry name" value="C2.B.1:_Sucrose_Phosphatase_Li"/>
    <property type="match status" value="1"/>
</dbReference>
<dbReference type="SFLD" id="SFLDG01140">
    <property type="entry name" value="C2.B:_Phosphomannomutase_and_P"/>
    <property type="match status" value="1"/>
</dbReference>
<dbReference type="SUPFAM" id="SSF56784">
    <property type="entry name" value="HAD-like"/>
    <property type="match status" value="1"/>
</dbReference>
<evidence type="ECO:0000269" key="1">
    <source>
    </source>
</evidence>
<evidence type="ECO:0000305" key="2"/>
<evidence type="ECO:0000312" key="3">
    <source>
        <dbReference type="EMBL" id="AAK86468.1"/>
    </source>
</evidence>
<evidence type="ECO:0000312" key="4">
    <source>
        <dbReference type="EMBL" id="ABU63293.1"/>
    </source>
</evidence>
<name>MFPP_AGRFC</name>
<sequence length="248" mass="27282">MKPLRLLSTDLDGTVVGDNDATRRFRDFWHALPDDLRPVLVFNSGRLIDDQLALLEEVPLPQPDYIIGGVGTMLHAKKRSELETAYTQSLGTGFDPRKIADVMNRIAGVTMQEERYQHGLKSSWFLHDADAAALGEIEAALLAADIDARIVYSSDRDLDILPKAADKGAALAWLCGQLRIGLDESVVSGDTGNDRAMFELKTIRGVIVGNALPELVSLAHQDNRFFHSTAKEADGVIEGLRHWGLNPR</sequence>
<organism>
    <name type="scientific">Agrobacterium fabrum (strain C58 / ATCC 33970)</name>
    <name type="common">Agrobacterium tumefaciens (strain C58)</name>
    <dbReference type="NCBI Taxonomy" id="176299"/>
    <lineage>
        <taxon>Bacteria</taxon>
        <taxon>Pseudomonadati</taxon>
        <taxon>Pseudomonadota</taxon>
        <taxon>Alphaproteobacteria</taxon>
        <taxon>Hyphomicrobiales</taxon>
        <taxon>Rhizobiaceae</taxon>
        <taxon>Rhizobium/Agrobacterium group</taxon>
        <taxon>Agrobacterium</taxon>
        <taxon>Agrobacterium tumefaciens complex</taxon>
    </lineage>
</organism>
<protein>
    <recommendedName>
        <fullName evidence="4">Mannosylfructose-phosphate phosphatase</fullName>
        <ecNumber>3.1.3.79</ecNumber>
    </recommendedName>
</protein>
<comment type="catalytic activity">
    <reaction evidence="1">
        <text>beta-D-fructofuranosyl alpha-D-mannopyranoside 6(F)-phosphate + H2O = beta-D-fructofuranosyl alpha-D-mannopyranoside + phosphate</text>
        <dbReference type="Rhea" id="RHEA:26019"/>
        <dbReference type="ChEBI" id="CHEBI:15377"/>
        <dbReference type="ChEBI" id="CHEBI:43474"/>
        <dbReference type="ChEBI" id="CHEBI:51833"/>
        <dbReference type="ChEBI" id="CHEBI:58870"/>
        <dbReference type="EC" id="3.1.3.79"/>
    </reaction>
</comment>
<comment type="activity regulation">
    <text evidence="1">Inhibited by the phosphatase inhibitors fluoride, molybdate and orthovanadate.</text>
</comment>
<comment type="pathway">
    <text evidence="1">Carbohydrate metabolism; mannosylfructose biosynthesis; beta-D-fructofuranosyl alpha-D-mannopyranoside from D-fructose 6-phosphate and GDP-alpha-D-mannose: step 2/2.</text>
</comment>
<comment type="induction">
    <text evidence="1">By salt.</text>
</comment>
<comment type="similarity">
    <text evidence="2">Belongs to the sucrose phosphatase family.</text>
</comment>
<proteinExistence type="evidence at protein level"/>
<gene>
    <name evidence="4" type="primary">mfppA</name>
    <name type="ordered locus">Atu0660</name>
    <name type="ORF">AGR_C_1175</name>
</gene>
<accession>A9CK30</accession>
<reference evidence="2 4" key="1">
    <citation type="journal article" date="2007" name="Proc. Natl. Acad. Sci. U.S.A.">
        <title>A metabolic pathway leading to mannosylfructose biosynthesis in Agrobacterium tumefaciens uncovers a family of mannosyltransferases.</title>
        <authorList>
            <person name="Torres L.L."/>
            <person name="Salerno G.L."/>
        </authorList>
    </citation>
    <scope>NUCLEOTIDE SEQUENCE [GENOMIC DNA]</scope>
    <scope>CATALYTIC ACTIVITY</scope>
    <scope>ACTIVITY REGULATION</scope>
    <scope>PATHWAY</scope>
    <scope>INDUCTION</scope>
</reference>
<reference evidence="3" key="2">
    <citation type="journal article" date="2001" name="Science">
        <title>The genome of the natural genetic engineer Agrobacterium tumefaciens C58.</title>
        <authorList>
            <person name="Wood D.W."/>
            <person name="Setubal J.C."/>
            <person name="Kaul R."/>
            <person name="Monks D.E."/>
            <person name="Kitajima J.P."/>
            <person name="Okura V.K."/>
            <person name="Zhou Y."/>
            <person name="Chen L."/>
            <person name="Wood G.E."/>
            <person name="Almeida N.F. Jr."/>
            <person name="Woo L."/>
            <person name="Chen Y."/>
            <person name="Paulsen I.T."/>
            <person name="Eisen J.A."/>
            <person name="Karp P.D."/>
            <person name="Bovee D. Sr."/>
            <person name="Chapman P."/>
            <person name="Clendenning J."/>
            <person name="Deatherage G."/>
            <person name="Gillet W."/>
            <person name="Grant C."/>
            <person name="Kutyavin T."/>
            <person name="Levy R."/>
            <person name="Li M.-J."/>
            <person name="McClelland E."/>
            <person name="Palmieri A."/>
            <person name="Raymond C."/>
            <person name="Rouse G."/>
            <person name="Saenphimmachak C."/>
            <person name="Wu Z."/>
            <person name="Romero P."/>
            <person name="Gordon D."/>
            <person name="Zhang S."/>
            <person name="Yoo H."/>
            <person name="Tao Y."/>
            <person name="Biddle P."/>
            <person name="Jung M."/>
            <person name="Krespan W."/>
            <person name="Perry M."/>
            <person name="Gordon-Kamm B."/>
            <person name="Liao L."/>
            <person name="Kim S."/>
            <person name="Hendrick C."/>
            <person name="Zhao Z.-Y."/>
            <person name="Dolan M."/>
            <person name="Chumley F."/>
            <person name="Tingey S.V."/>
            <person name="Tomb J.-F."/>
            <person name="Gordon M.P."/>
            <person name="Olson M.V."/>
            <person name="Nester E.W."/>
        </authorList>
    </citation>
    <scope>NUCLEOTIDE SEQUENCE [LARGE SCALE GENOMIC DNA]</scope>
    <source>
        <strain>C58 / ATCC 33970</strain>
    </source>
</reference>
<reference evidence="3" key="3">
    <citation type="journal article" date="2001" name="Science">
        <title>Genome sequence of the plant pathogen and biotechnology agent Agrobacterium tumefaciens C58.</title>
        <authorList>
            <person name="Goodner B."/>
            <person name="Hinkle G."/>
            <person name="Gattung S."/>
            <person name="Miller N."/>
            <person name="Blanchard M."/>
            <person name="Qurollo B."/>
            <person name="Goldman B.S."/>
            <person name="Cao Y."/>
            <person name="Askenazi M."/>
            <person name="Halling C."/>
            <person name="Mullin L."/>
            <person name="Houmiel K."/>
            <person name="Gordon J."/>
            <person name="Vaudin M."/>
            <person name="Iartchouk O."/>
            <person name="Epp A."/>
            <person name="Liu F."/>
            <person name="Wollam C."/>
            <person name="Allinger M."/>
            <person name="Doughty D."/>
            <person name="Scott C."/>
            <person name="Lappas C."/>
            <person name="Markelz B."/>
            <person name="Flanagan C."/>
            <person name="Crowell C."/>
            <person name="Gurson J."/>
            <person name="Lomo C."/>
            <person name="Sear C."/>
            <person name="Strub G."/>
            <person name="Cielo C."/>
            <person name="Slater S."/>
        </authorList>
    </citation>
    <scope>NUCLEOTIDE SEQUENCE [LARGE SCALE GENOMIC DNA]</scope>
    <source>
        <strain>C58 / ATCC 33970</strain>
    </source>
</reference>
<feature type="chain" id="PRO_0000401101" description="Mannosylfructose-phosphate phosphatase">
    <location>
        <begin position="1"/>
        <end position="248"/>
    </location>
</feature>